<keyword id="KW-0997">Cell inner membrane</keyword>
<keyword id="KW-1003">Cell membrane</keyword>
<keyword id="KW-0407">Ion channel</keyword>
<keyword id="KW-0406">Ion transport</keyword>
<keyword id="KW-0472">Membrane</keyword>
<keyword id="KW-0479">Metal-binding</keyword>
<keyword id="KW-1185">Reference proteome</keyword>
<keyword id="KW-0915">Sodium</keyword>
<keyword id="KW-0812">Transmembrane</keyword>
<keyword id="KW-1133">Transmembrane helix</keyword>
<keyword id="KW-0813">Transport</keyword>
<sequence>MLQLLLAVFIGGGTGSVARWLLSMRFNPLHQAIPLGTLAANLIGAFIIGMGFAWFSRMTNIDPVWKVLITTGFCGGLTTFSTFSAEVVFLLQEGRFGWALLNVFVNLLGSFAMTALAFWLFSASTAH</sequence>
<gene>
    <name evidence="1" type="primary">fluC</name>
    <name evidence="1" type="synonym">crcB</name>
    <name type="ordered locus">E2348C_0525</name>
</gene>
<feature type="chain" id="PRO_1000135320" description="Fluoride-specific ion channel FluC">
    <location>
        <begin position="1"/>
        <end position="127"/>
    </location>
</feature>
<feature type="transmembrane region" description="Helical" evidence="1">
    <location>
        <begin position="4"/>
        <end position="24"/>
    </location>
</feature>
<feature type="transmembrane region" description="Helical" evidence="1">
    <location>
        <begin position="35"/>
        <end position="55"/>
    </location>
</feature>
<feature type="transmembrane region" description="Helical" evidence="1">
    <location>
        <begin position="71"/>
        <end position="91"/>
    </location>
</feature>
<feature type="transmembrane region" description="Helical" evidence="1">
    <location>
        <begin position="103"/>
        <end position="123"/>
    </location>
</feature>
<feature type="binding site" evidence="1">
    <location>
        <position position="75"/>
    </location>
    <ligand>
        <name>Na(+)</name>
        <dbReference type="ChEBI" id="CHEBI:29101"/>
        <note>structural</note>
    </ligand>
</feature>
<feature type="binding site" evidence="1">
    <location>
        <position position="78"/>
    </location>
    <ligand>
        <name>Na(+)</name>
        <dbReference type="ChEBI" id="CHEBI:29101"/>
        <note>structural</note>
    </ligand>
</feature>
<proteinExistence type="inferred from homology"/>
<reference key="1">
    <citation type="journal article" date="2009" name="J. Bacteriol.">
        <title>Complete genome sequence and comparative genome analysis of enteropathogenic Escherichia coli O127:H6 strain E2348/69.</title>
        <authorList>
            <person name="Iguchi A."/>
            <person name="Thomson N.R."/>
            <person name="Ogura Y."/>
            <person name="Saunders D."/>
            <person name="Ooka T."/>
            <person name="Henderson I.R."/>
            <person name="Harris D."/>
            <person name="Asadulghani M."/>
            <person name="Kurokawa K."/>
            <person name="Dean P."/>
            <person name="Kenny B."/>
            <person name="Quail M.A."/>
            <person name="Thurston S."/>
            <person name="Dougan G."/>
            <person name="Hayashi T."/>
            <person name="Parkhill J."/>
            <person name="Frankel G."/>
        </authorList>
    </citation>
    <scope>NUCLEOTIDE SEQUENCE [LARGE SCALE GENOMIC DNA]</scope>
    <source>
        <strain>E2348/69 / EPEC</strain>
    </source>
</reference>
<protein>
    <recommendedName>
        <fullName evidence="1">Fluoride-specific ion channel FluC</fullName>
    </recommendedName>
</protein>
<evidence type="ECO:0000255" key="1">
    <source>
        <dbReference type="HAMAP-Rule" id="MF_00454"/>
    </source>
</evidence>
<name>FLUC_ECO27</name>
<comment type="function">
    <text evidence="1">Fluoride-specific ion channel. Important for reducing fluoride concentration in the cell, thus reducing its toxicity.</text>
</comment>
<comment type="catalytic activity">
    <reaction evidence="1">
        <text>fluoride(in) = fluoride(out)</text>
        <dbReference type="Rhea" id="RHEA:76159"/>
        <dbReference type="ChEBI" id="CHEBI:17051"/>
    </reaction>
    <physiologicalReaction direction="left-to-right" evidence="1">
        <dbReference type="Rhea" id="RHEA:76160"/>
    </physiologicalReaction>
</comment>
<comment type="activity regulation">
    <text evidence="1">Na(+) is not transported, but it plays an essential structural role and its presence is essential for fluoride channel function.</text>
</comment>
<comment type="subcellular location">
    <subcellularLocation>
        <location evidence="1">Cell inner membrane</location>
        <topology evidence="1">Multi-pass membrane protein</topology>
    </subcellularLocation>
</comment>
<comment type="similarity">
    <text evidence="1">Belongs to the fluoride channel Fluc/FEX (TC 1.A.43) family.</text>
</comment>
<dbReference type="EMBL" id="FM180568">
    <property type="protein sequence ID" value="CAS08073.1"/>
    <property type="molecule type" value="Genomic_DNA"/>
</dbReference>
<dbReference type="RefSeq" id="WP_000939738.1">
    <property type="nucleotide sequence ID" value="NC_011601.1"/>
</dbReference>
<dbReference type="SMR" id="B7UKR6"/>
<dbReference type="GeneID" id="93776858"/>
<dbReference type="KEGG" id="ecg:E2348C_0525"/>
<dbReference type="HOGENOM" id="CLU_114342_3_3_6"/>
<dbReference type="Proteomes" id="UP000008205">
    <property type="component" value="Chromosome"/>
</dbReference>
<dbReference type="GO" id="GO:0005886">
    <property type="term" value="C:plasma membrane"/>
    <property type="evidence" value="ECO:0007669"/>
    <property type="project" value="UniProtKB-SubCell"/>
</dbReference>
<dbReference type="GO" id="GO:0062054">
    <property type="term" value="F:fluoride channel activity"/>
    <property type="evidence" value="ECO:0007669"/>
    <property type="project" value="UniProtKB-UniRule"/>
</dbReference>
<dbReference type="GO" id="GO:0046872">
    <property type="term" value="F:metal ion binding"/>
    <property type="evidence" value="ECO:0007669"/>
    <property type="project" value="UniProtKB-KW"/>
</dbReference>
<dbReference type="GO" id="GO:0140114">
    <property type="term" value="P:cellular detoxification of fluoride"/>
    <property type="evidence" value="ECO:0007669"/>
    <property type="project" value="UniProtKB-UniRule"/>
</dbReference>
<dbReference type="HAMAP" id="MF_00454">
    <property type="entry name" value="FluC"/>
    <property type="match status" value="1"/>
</dbReference>
<dbReference type="InterPro" id="IPR003691">
    <property type="entry name" value="FluC"/>
</dbReference>
<dbReference type="NCBIfam" id="TIGR00494">
    <property type="entry name" value="crcB"/>
    <property type="match status" value="1"/>
</dbReference>
<dbReference type="NCBIfam" id="NF010792">
    <property type="entry name" value="PRK14196.1"/>
    <property type="match status" value="1"/>
</dbReference>
<dbReference type="PANTHER" id="PTHR28259">
    <property type="entry name" value="FLUORIDE EXPORT PROTEIN 1-RELATED"/>
    <property type="match status" value="1"/>
</dbReference>
<dbReference type="PANTHER" id="PTHR28259:SF1">
    <property type="entry name" value="FLUORIDE EXPORT PROTEIN 1-RELATED"/>
    <property type="match status" value="1"/>
</dbReference>
<dbReference type="Pfam" id="PF02537">
    <property type="entry name" value="CRCB"/>
    <property type="match status" value="1"/>
</dbReference>
<accession>B7UKR6</accession>
<organism>
    <name type="scientific">Escherichia coli O127:H6 (strain E2348/69 / EPEC)</name>
    <dbReference type="NCBI Taxonomy" id="574521"/>
    <lineage>
        <taxon>Bacteria</taxon>
        <taxon>Pseudomonadati</taxon>
        <taxon>Pseudomonadota</taxon>
        <taxon>Gammaproteobacteria</taxon>
        <taxon>Enterobacterales</taxon>
        <taxon>Enterobacteriaceae</taxon>
        <taxon>Escherichia</taxon>
    </lineage>
</organism>